<organism>
    <name type="scientific">Treponema denticola (strain ATCC 35405 / DSM 14222 / CIP 103919 / JCM 8153 / KCTC 15104)</name>
    <dbReference type="NCBI Taxonomy" id="243275"/>
    <lineage>
        <taxon>Bacteria</taxon>
        <taxon>Pseudomonadati</taxon>
        <taxon>Spirochaetota</taxon>
        <taxon>Spirochaetia</taxon>
        <taxon>Spirochaetales</taxon>
        <taxon>Treponemataceae</taxon>
        <taxon>Treponema</taxon>
    </lineage>
</organism>
<accession>Q73NX5</accession>
<reference key="1">
    <citation type="journal article" date="2004" name="Proc. Natl. Acad. Sci. U.S.A.">
        <title>Comparison of the genome of the oral pathogen Treponema denticola with other spirochete genomes.</title>
        <authorList>
            <person name="Seshadri R."/>
            <person name="Myers G.S.A."/>
            <person name="Tettelin H."/>
            <person name="Eisen J.A."/>
            <person name="Heidelberg J.F."/>
            <person name="Dodson R.J."/>
            <person name="Davidsen T.M."/>
            <person name="DeBoy R.T."/>
            <person name="Fouts D.E."/>
            <person name="Haft D.H."/>
            <person name="Selengut J."/>
            <person name="Ren Q."/>
            <person name="Brinkac L.M."/>
            <person name="Madupu R."/>
            <person name="Kolonay J.F."/>
            <person name="Durkin S.A."/>
            <person name="Daugherty S.C."/>
            <person name="Shetty J."/>
            <person name="Shvartsbeyn A."/>
            <person name="Gebregeorgis E."/>
            <person name="Geer K."/>
            <person name="Tsegaye G."/>
            <person name="Malek J.A."/>
            <person name="Ayodeji B."/>
            <person name="Shatsman S."/>
            <person name="McLeod M.P."/>
            <person name="Smajs D."/>
            <person name="Howell J.K."/>
            <person name="Pal S."/>
            <person name="Amin A."/>
            <person name="Vashisth P."/>
            <person name="McNeill T.Z."/>
            <person name="Xiang Q."/>
            <person name="Sodergren E."/>
            <person name="Baca E."/>
            <person name="Weinstock G.M."/>
            <person name="Norris S.J."/>
            <person name="Fraser C.M."/>
            <person name="Paulsen I.T."/>
        </authorList>
    </citation>
    <scope>NUCLEOTIDE SEQUENCE [LARGE SCALE GENOMIC DNA]</scope>
    <source>
        <strain>ATCC 35405 / DSM 14222 / CIP 103919 / JCM 8153 / KCTC 15104</strain>
    </source>
</reference>
<dbReference type="EC" id="3.1.26.3" evidence="1"/>
<dbReference type="EMBL" id="AE017226">
    <property type="protein sequence ID" value="AAS11516.1"/>
    <property type="molecule type" value="Genomic_DNA"/>
</dbReference>
<dbReference type="RefSeq" id="NP_971635.1">
    <property type="nucleotide sequence ID" value="NC_002967.9"/>
</dbReference>
<dbReference type="RefSeq" id="WP_002670498.1">
    <property type="nucleotide sequence ID" value="NC_002967.9"/>
</dbReference>
<dbReference type="SMR" id="Q73NX5"/>
<dbReference type="STRING" id="243275.TDE_1027"/>
<dbReference type="PaxDb" id="243275-TDE_1027"/>
<dbReference type="GeneID" id="2741505"/>
<dbReference type="KEGG" id="tde:TDE_1027"/>
<dbReference type="PATRIC" id="fig|243275.7.peg.989"/>
<dbReference type="eggNOG" id="COG0571">
    <property type="taxonomic scope" value="Bacteria"/>
</dbReference>
<dbReference type="HOGENOM" id="CLU_000907_1_3_12"/>
<dbReference type="OrthoDB" id="9805026at2"/>
<dbReference type="Proteomes" id="UP000008212">
    <property type="component" value="Chromosome"/>
</dbReference>
<dbReference type="GO" id="GO:0005737">
    <property type="term" value="C:cytoplasm"/>
    <property type="evidence" value="ECO:0007669"/>
    <property type="project" value="UniProtKB-SubCell"/>
</dbReference>
<dbReference type="GO" id="GO:0003725">
    <property type="term" value="F:double-stranded RNA binding"/>
    <property type="evidence" value="ECO:0007669"/>
    <property type="project" value="TreeGrafter"/>
</dbReference>
<dbReference type="GO" id="GO:0046872">
    <property type="term" value="F:metal ion binding"/>
    <property type="evidence" value="ECO:0007669"/>
    <property type="project" value="UniProtKB-KW"/>
</dbReference>
<dbReference type="GO" id="GO:0004525">
    <property type="term" value="F:ribonuclease III activity"/>
    <property type="evidence" value="ECO:0007669"/>
    <property type="project" value="UniProtKB-UniRule"/>
</dbReference>
<dbReference type="GO" id="GO:0019843">
    <property type="term" value="F:rRNA binding"/>
    <property type="evidence" value="ECO:0007669"/>
    <property type="project" value="UniProtKB-KW"/>
</dbReference>
<dbReference type="GO" id="GO:0006397">
    <property type="term" value="P:mRNA processing"/>
    <property type="evidence" value="ECO:0007669"/>
    <property type="project" value="UniProtKB-UniRule"/>
</dbReference>
<dbReference type="GO" id="GO:0010468">
    <property type="term" value="P:regulation of gene expression"/>
    <property type="evidence" value="ECO:0007669"/>
    <property type="project" value="TreeGrafter"/>
</dbReference>
<dbReference type="GO" id="GO:0006364">
    <property type="term" value="P:rRNA processing"/>
    <property type="evidence" value="ECO:0007669"/>
    <property type="project" value="UniProtKB-UniRule"/>
</dbReference>
<dbReference type="GO" id="GO:0008033">
    <property type="term" value="P:tRNA processing"/>
    <property type="evidence" value="ECO:0007669"/>
    <property type="project" value="UniProtKB-KW"/>
</dbReference>
<dbReference type="CDD" id="cd10845">
    <property type="entry name" value="DSRM_RNAse_III_family"/>
    <property type="match status" value="1"/>
</dbReference>
<dbReference type="CDD" id="cd00593">
    <property type="entry name" value="RIBOc"/>
    <property type="match status" value="1"/>
</dbReference>
<dbReference type="FunFam" id="1.10.1520.10:FF:000001">
    <property type="entry name" value="Ribonuclease 3"/>
    <property type="match status" value="1"/>
</dbReference>
<dbReference type="FunFam" id="3.30.160.20:FF:000003">
    <property type="entry name" value="Ribonuclease 3"/>
    <property type="match status" value="1"/>
</dbReference>
<dbReference type="Gene3D" id="3.30.160.20">
    <property type="match status" value="1"/>
</dbReference>
<dbReference type="Gene3D" id="1.10.1520.10">
    <property type="entry name" value="Ribonuclease III domain"/>
    <property type="match status" value="1"/>
</dbReference>
<dbReference type="HAMAP" id="MF_00104">
    <property type="entry name" value="RNase_III"/>
    <property type="match status" value="1"/>
</dbReference>
<dbReference type="InterPro" id="IPR014720">
    <property type="entry name" value="dsRBD_dom"/>
</dbReference>
<dbReference type="InterPro" id="IPR011907">
    <property type="entry name" value="RNase_III"/>
</dbReference>
<dbReference type="InterPro" id="IPR000999">
    <property type="entry name" value="RNase_III_dom"/>
</dbReference>
<dbReference type="InterPro" id="IPR036389">
    <property type="entry name" value="RNase_III_sf"/>
</dbReference>
<dbReference type="NCBIfam" id="TIGR02191">
    <property type="entry name" value="RNaseIII"/>
    <property type="match status" value="1"/>
</dbReference>
<dbReference type="PANTHER" id="PTHR11207:SF0">
    <property type="entry name" value="RIBONUCLEASE 3"/>
    <property type="match status" value="1"/>
</dbReference>
<dbReference type="PANTHER" id="PTHR11207">
    <property type="entry name" value="RIBONUCLEASE III"/>
    <property type="match status" value="1"/>
</dbReference>
<dbReference type="Pfam" id="PF00035">
    <property type="entry name" value="dsrm"/>
    <property type="match status" value="1"/>
</dbReference>
<dbReference type="Pfam" id="PF14622">
    <property type="entry name" value="Ribonucleas_3_3"/>
    <property type="match status" value="1"/>
</dbReference>
<dbReference type="SMART" id="SM00358">
    <property type="entry name" value="DSRM"/>
    <property type="match status" value="1"/>
</dbReference>
<dbReference type="SMART" id="SM00535">
    <property type="entry name" value="RIBOc"/>
    <property type="match status" value="1"/>
</dbReference>
<dbReference type="SUPFAM" id="SSF54768">
    <property type="entry name" value="dsRNA-binding domain-like"/>
    <property type="match status" value="1"/>
</dbReference>
<dbReference type="SUPFAM" id="SSF69065">
    <property type="entry name" value="RNase III domain-like"/>
    <property type="match status" value="1"/>
</dbReference>
<dbReference type="PROSITE" id="PS50137">
    <property type="entry name" value="DS_RBD"/>
    <property type="match status" value="1"/>
</dbReference>
<dbReference type="PROSITE" id="PS00517">
    <property type="entry name" value="RNASE_3_1"/>
    <property type="match status" value="1"/>
</dbReference>
<dbReference type="PROSITE" id="PS50142">
    <property type="entry name" value="RNASE_3_2"/>
    <property type="match status" value="1"/>
</dbReference>
<comment type="function">
    <text evidence="1">Digests double-stranded RNA. Involved in the processing of primary rRNA transcript to yield the immediate precursors to the large and small rRNAs (23S and 16S). Processes some mRNAs, and tRNAs when they are encoded in the rRNA operon. Processes pre-crRNA and tracrRNA of type II CRISPR loci if present in the organism.</text>
</comment>
<comment type="catalytic activity">
    <reaction evidence="1">
        <text>Endonucleolytic cleavage to 5'-phosphomonoester.</text>
        <dbReference type="EC" id="3.1.26.3"/>
    </reaction>
</comment>
<comment type="cofactor">
    <cofactor evidence="1">
        <name>Mg(2+)</name>
        <dbReference type="ChEBI" id="CHEBI:18420"/>
    </cofactor>
</comment>
<comment type="subunit">
    <text evidence="1">Homodimer.</text>
</comment>
<comment type="subcellular location">
    <subcellularLocation>
        <location evidence="1">Cytoplasm</location>
    </subcellularLocation>
</comment>
<comment type="similarity">
    <text evidence="1">Belongs to the ribonuclease III family.</text>
</comment>
<proteinExistence type="inferred from homology"/>
<feature type="chain" id="PRO_0000228598" description="Ribonuclease 3">
    <location>
        <begin position="1"/>
        <end position="246"/>
    </location>
</feature>
<feature type="domain" description="RNase III" evidence="1">
    <location>
        <begin position="16"/>
        <end position="144"/>
    </location>
</feature>
<feature type="domain" description="DRBM" evidence="1">
    <location>
        <begin position="171"/>
        <end position="240"/>
    </location>
</feature>
<feature type="active site" evidence="1">
    <location>
        <position position="61"/>
    </location>
</feature>
<feature type="active site" evidence="1">
    <location>
        <position position="133"/>
    </location>
</feature>
<feature type="binding site" evidence="1">
    <location>
        <position position="57"/>
    </location>
    <ligand>
        <name>Mg(2+)</name>
        <dbReference type="ChEBI" id="CHEBI:18420"/>
    </ligand>
</feature>
<feature type="binding site" evidence="1">
    <location>
        <position position="130"/>
    </location>
    <ligand>
        <name>Mg(2+)</name>
        <dbReference type="ChEBI" id="CHEBI:18420"/>
    </ligand>
</feature>
<feature type="binding site" evidence="1">
    <location>
        <position position="133"/>
    </location>
    <ligand>
        <name>Mg(2+)</name>
        <dbReference type="ChEBI" id="CHEBI:18420"/>
    </ligand>
</feature>
<protein>
    <recommendedName>
        <fullName evidence="1">Ribonuclease 3</fullName>
        <ecNumber evidence="1">3.1.26.3</ecNumber>
    </recommendedName>
    <alternativeName>
        <fullName evidence="1">Ribonuclease III</fullName>
        <shortName evidence="1">RNase III</shortName>
    </alternativeName>
</protein>
<gene>
    <name evidence="1" type="primary">rnc</name>
    <name type="ordered locus">TDE_1027</name>
</gene>
<keyword id="KW-0963">Cytoplasm</keyword>
<keyword id="KW-0255">Endonuclease</keyword>
<keyword id="KW-0378">Hydrolase</keyword>
<keyword id="KW-0460">Magnesium</keyword>
<keyword id="KW-0479">Metal-binding</keyword>
<keyword id="KW-0507">mRNA processing</keyword>
<keyword id="KW-0540">Nuclease</keyword>
<keyword id="KW-1185">Reference proteome</keyword>
<keyword id="KW-0694">RNA-binding</keyword>
<keyword id="KW-0698">rRNA processing</keyword>
<keyword id="KW-0699">rRNA-binding</keyword>
<keyword id="KW-0819">tRNA processing</keyword>
<sequence>MFPIKSGLEPKRKQELLEFQKQAGLKFKDLRLLDLAFHHRSFSNEHNNFHANNERLEFLGDSVLGLVAASYLYKSFEDRPEGELAKIKASAVSEDALSKTASKLNISNYLVLGRGEEMSGGREKKAILADALEAVIGAYYIDSGFKAAQKFVLRLLESTIHSVLEKKFISDYKSLLQELVQKKFKTVPKYELKKASGPDHDRTFWFSVSINGKVYGPLSGKTKKEAEQSVAKVAYENLCSESTVSK</sequence>
<name>RNC_TREDE</name>
<evidence type="ECO:0000255" key="1">
    <source>
        <dbReference type="HAMAP-Rule" id="MF_00104"/>
    </source>
</evidence>